<keyword id="KW-0175">Coiled coil</keyword>
<keyword id="KW-0391">Immunity</keyword>
<keyword id="KW-0399">Innate immunity</keyword>
<keyword id="KW-0507">mRNA processing</keyword>
<keyword id="KW-0508">mRNA splicing</keyword>
<keyword id="KW-0539">Nucleus</keyword>
<keyword id="KW-0611">Plant defense</keyword>
<keyword id="KW-1185">Reference proteome</keyword>
<keyword id="KW-0747">Spliceosome</keyword>
<name>SPF27_ARATH</name>
<reference key="1">
    <citation type="journal article" date="2007" name="Genes Dev.">
        <title>Regulation of plant innate immunity by three proteins in a complex conserved across the plant and animal kingdoms.</title>
        <authorList>
            <person name="Palma K."/>
            <person name="Zhao Q."/>
            <person name="Cheng Y.T."/>
            <person name="Bi D."/>
            <person name="Monaghan J."/>
            <person name="Cheng W."/>
            <person name="Zhang Y."/>
            <person name="Li X."/>
        </authorList>
    </citation>
    <scope>NUCLEOTIDE SEQUENCE [MRNA]</scope>
    <scope>SUBCELLULAR LOCATION</scope>
    <scope>INTERACTION WITH CDC5</scope>
    <scope>DISRUPTION PHENOTYPE</scope>
    <scope>COMPONENT OF THE MAC COMPLEX</scope>
    <scope>FUNCTION</scope>
    <source>
        <strain>cv. Columbia</strain>
    </source>
</reference>
<reference key="2">
    <citation type="journal article" date="2000" name="DNA Res.">
        <title>Structural analysis of Arabidopsis thaliana chromosome 3. II. Sequence features of the 4,251,695 bp regions covered by 90 P1, TAC and BAC clones.</title>
        <authorList>
            <person name="Kaneko T."/>
            <person name="Katoh T."/>
            <person name="Sato S."/>
            <person name="Nakamura Y."/>
            <person name="Asamizu E."/>
            <person name="Tabata S."/>
        </authorList>
    </citation>
    <scope>NUCLEOTIDE SEQUENCE [LARGE SCALE GENOMIC DNA]</scope>
    <source>
        <strain>cv. Columbia</strain>
    </source>
</reference>
<reference key="3">
    <citation type="journal article" date="2017" name="Plant J.">
        <title>Araport11: a complete reannotation of the Arabidopsis thaliana reference genome.</title>
        <authorList>
            <person name="Cheng C.Y."/>
            <person name="Krishnakumar V."/>
            <person name="Chan A.P."/>
            <person name="Thibaud-Nissen F."/>
            <person name="Schobel S."/>
            <person name="Town C.D."/>
        </authorList>
    </citation>
    <scope>GENOME REANNOTATION</scope>
    <source>
        <strain>cv. Columbia</strain>
    </source>
</reference>
<reference key="4">
    <citation type="journal article" date="2003" name="Science">
        <title>Empirical analysis of transcriptional activity in the Arabidopsis genome.</title>
        <authorList>
            <person name="Yamada K."/>
            <person name="Lim J."/>
            <person name="Dale J.M."/>
            <person name="Chen H."/>
            <person name="Shinn P."/>
            <person name="Palm C.J."/>
            <person name="Southwick A.M."/>
            <person name="Wu H.C."/>
            <person name="Kim C.J."/>
            <person name="Nguyen M."/>
            <person name="Pham P.K."/>
            <person name="Cheuk R.F."/>
            <person name="Karlin-Newmann G."/>
            <person name="Liu S.X."/>
            <person name="Lam B."/>
            <person name="Sakano H."/>
            <person name="Wu T."/>
            <person name="Yu G."/>
            <person name="Miranda M."/>
            <person name="Quach H.L."/>
            <person name="Tripp M."/>
            <person name="Chang C.H."/>
            <person name="Lee J.M."/>
            <person name="Toriumi M.J."/>
            <person name="Chan M.M."/>
            <person name="Tang C.C."/>
            <person name="Onodera C.S."/>
            <person name="Deng J.M."/>
            <person name="Akiyama K."/>
            <person name="Ansari Y."/>
            <person name="Arakawa T."/>
            <person name="Banh J."/>
            <person name="Banno F."/>
            <person name="Bowser L."/>
            <person name="Brooks S.Y."/>
            <person name="Carninci P."/>
            <person name="Chao Q."/>
            <person name="Choy N."/>
            <person name="Enju A."/>
            <person name="Goldsmith A.D."/>
            <person name="Gurjal M."/>
            <person name="Hansen N.F."/>
            <person name="Hayashizaki Y."/>
            <person name="Johnson-Hopson C."/>
            <person name="Hsuan V.W."/>
            <person name="Iida K."/>
            <person name="Karnes M."/>
            <person name="Khan S."/>
            <person name="Koesema E."/>
            <person name="Ishida J."/>
            <person name="Jiang P.X."/>
            <person name="Jones T."/>
            <person name="Kawai J."/>
            <person name="Kamiya A."/>
            <person name="Meyers C."/>
            <person name="Nakajima M."/>
            <person name="Narusaka M."/>
            <person name="Seki M."/>
            <person name="Sakurai T."/>
            <person name="Satou M."/>
            <person name="Tamse R."/>
            <person name="Vaysberg M."/>
            <person name="Wallender E.K."/>
            <person name="Wong C."/>
            <person name="Yamamura Y."/>
            <person name="Yuan S."/>
            <person name="Shinozaki K."/>
            <person name="Davis R.W."/>
            <person name="Theologis A."/>
            <person name="Ecker J.R."/>
        </authorList>
    </citation>
    <scope>NUCLEOTIDE SEQUENCE [LARGE SCALE MRNA]</scope>
    <source>
        <strain>cv. Columbia</strain>
    </source>
</reference>
<reference key="5">
    <citation type="submission" date="2002-03" db="EMBL/GenBank/DDBJ databases">
        <title>Full-length cDNA from Arabidopsis thaliana.</title>
        <authorList>
            <person name="Brover V.V."/>
            <person name="Troukhan M.E."/>
            <person name="Alexandrov N.A."/>
            <person name="Lu Y.-P."/>
            <person name="Flavell R.B."/>
            <person name="Feldmann K.A."/>
        </authorList>
    </citation>
    <scope>NUCLEOTIDE SEQUENCE [LARGE SCALE MRNA]</scope>
</reference>
<reference key="6">
    <citation type="journal article" date="2009" name="PLoS Pathog.">
        <title>Two Prp19-like U-box proteins in the MOS4-associated complex play redundant roles in plant innate immunity.</title>
        <authorList>
            <person name="Monaghan J."/>
            <person name="Xu F."/>
            <person name="Gao M."/>
            <person name="Zhao Q."/>
            <person name="Palma K."/>
            <person name="Long C."/>
            <person name="Chen S."/>
            <person name="Zhang Y."/>
            <person name="Li X."/>
        </authorList>
    </citation>
    <scope>IDENTIFICATION BY MASS SPECTROMETRY</scope>
    <scope>COMPONENT OF THE MAC COMPLEX</scope>
</reference>
<reference key="7">
    <citation type="journal article" date="2012" name="Plant J.">
        <title>The cyclin L homolog MOS12 and the MOS4-associated complex are required for the proper splicing of plant resistance genes.</title>
        <authorList>
            <person name="Xu F."/>
            <person name="Xu S."/>
            <person name="Wiermer M."/>
            <person name="Zhang Y."/>
            <person name="Li X."/>
        </authorList>
    </citation>
    <scope>FUNCTION</scope>
    <scope>INTERACTION WITH CYCL1-1</scope>
</reference>
<reference key="8">
    <citation type="journal article" date="2018" name="J. Mol. Biol.">
        <title>The adaptor protein ENY2 is a component of the deubiquitination module of the Arabidopsis SAGA transcriptional co-activator complex but not of the TREX-2 complex.</title>
        <authorList>
            <person name="Pfab A."/>
            <person name="Bruckmann A."/>
            <person name="Nazet J."/>
            <person name="Merkl R."/>
            <person name="Grasser K.D."/>
        </authorList>
    </citation>
    <scope>IDENTIFICATION BY MASS SPECTROMETRY</scope>
    <scope>INTERACTION WITH ENY2</scope>
    <scope>SUBCELLULAR LOCATION</scope>
</reference>
<sequence>MATNNGDVLMLEATPEAARPWASAANAEVIDALPYIDDDYGNPLIKSEVDRLVEEEMRRSSKKPADFLKDLPPLPKFDFKNCPVLGKEYERVRAGKPPVRIDFESRYKLEMPPANKRNDDAAWKQYLQKNQRSLQQKLIELENLELMSKLGPELWRQNNHRLEVFLTRMQRLAQEQNEEIEKVNRERKYHQQTTSYELNALSQEWRQLCVKNMEIQSACAMLETQIDSFKKEAAERGWNLEEKLENVEPLQMQ</sequence>
<protein>
    <recommendedName>
        <fullName>Pre-mRNA-splicing factor SPF27 homolog</fullName>
    </recommendedName>
    <alternativeName>
        <fullName>Modifier of SNC1 member 4</fullName>
    </alternativeName>
    <alternativeName>
        <fullName>Protein BCAS2 homolog</fullName>
    </alternativeName>
</protein>
<comment type="function">
    <text evidence="2 4">Component of the MAC complex that probably regulates defense responses through transcriptional control and thereby is essential for plant innate immunity. Involved in mRNA splicing.</text>
</comment>
<comment type="subunit">
    <text evidence="3 4 5">Component of the multiprotein assembly MOS4-associated complex (MAC) at least composed of MOS4, CDC5 and PRL1 (PubMed:19629177). Interacts with CYCL1-1 and CDC5 (PubMed:22248079). Associated with the spliceosome (PubMed:22248079). Interacts with ENY2 (PubMed:29588169).</text>
</comment>
<comment type="interaction">
    <interactant intactId="EBI-1382943">
        <id>Q949S9</id>
    </interactant>
    <interactant intactId="EBI-1382948">
        <id>P92948</id>
        <label>CDC5</label>
    </interactant>
    <organismsDiffer>false</organismsDiffer>
    <experiments>3</experiments>
</comment>
<comment type="subcellular location">
    <subcellularLocation>
        <location evidence="2 5">Nucleus</location>
    </subcellularLocation>
</comment>
<comment type="disruption phenotype">
    <text evidence="2">Enhanced susceptibility to virulent and avirulent pathogens.</text>
</comment>
<comment type="similarity">
    <text evidence="6">Belongs to the SPF27 family.</text>
</comment>
<comment type="sequence caution" evidence="6">
    <conflict type="erroneous gene model prediction">
        <sequence resource="EMBL-CDS" id="BAB02029"/>
    </conflict>
</comment>
<proteinExistence type="evidence at protein level"/>
<dbReference type="EMBL" id="EF688334">
    <property type="protein sequence ID" value="ABS20115.1"/>
    <property type="molecule type" value="mRNA"/>
</dbReference>
<dbReference type="EMBL" id="AB020749">
    <property type="protein sequence ID" value="BAB02029.1"/>
    <property type="status" value="ALT_SEQ"/>
    <property type="molecule type" value="Genomic_DNA"/>
</dbReference>
<dbReference type="EMBL" id="CP002686">
    <property type="protein sequence ID" value="AEE76058.1"/>
    <property type="molecule type" value="Genomic_DNA"/>
</dbReference>
<dbReference type="EMBL" id="AY050910">
    <property type="protein sequence ID" value="AAK93587.1"/>
    <property type="molecule type" value="mRNA"/>
</dbReference>
<dbReference type="EMBL" id="AY091412">
    <property type="protein sequence ID" value="AAM14351.1"/>
    <property type="molecule type" value="mRNA"/>
</dbReference>
<dbReference type="EMBL" id="AY088112">
    <property type="protein sequence ID" value="AAM65658.1"/>
    <property type="molecule type" value="mRNA"/>
</dbReference>
<dbReference type="RefSeq" id="NP_566599.1">
    <property type="nucleotide sequence ID" value="NM_112699.3"/>
</dbReference>
<dbReference type="SMR" id="Q949S9"/>
<dbReference type="BioGRID" id="6676">
    <property type="interactions" value="11"/>
</dbReference>
<dbReference type="FunCoup" id="Q949S9">
    <property type="interactions" value="4444"/>
</dbReference>
<dbReference type="IntAct" id="Q949S9">
    <property type="interactions" value="24"/>
</dbReference>
<dbReference type="STRING" id="3702.Q949S9"/>
<dbReference type="PaxDb" id="3702-AT3G18165.1"/>
<dbReference type="ProteomicsDB" id="245335"/>
<dbReference type="EnsemblPlants" id="AT3G18165.1">
    <property type="protein sequence ID" value="AT3G18165.1"/>
    <property type="gene ID" value="AT3G18165"/>
</dbReference>
<dbReference type="GeneID" id="821343"/>
<dbReference type="Gramene" id="AT3G18165.1">
    <property type="protein sequence ID" value="AT3G18165.1"/>
    <property type="gene ID" value="AT3G18165"/>
</dbReference>
<dbReference type="KEGG" id="ath:AT3G18165"/>
<dbReference type="Araport" id="AT3G18165"/>
<dbReference type="TAIR" id="AT3G18165">
    <property type="gene designation" value="MOS4"/>
</dbReference>
<dbReference type="eggNOG" id="KOG3096">
    <property type="taxonomic scope" value="Eukaryota"/>
</dbReference>
<dbReference type="HOGENOM" id="CLU_082523_0_0_1"/>
<dbReference type="InParanoid" id="Q949S9"/>
<dbReference type="OMA" id="SAWQESI"/>
<dbReference type="OrthoDB" id="205794at2759"/>
<dbReference type="PhylomeDB" id="Q949S9"/>
<dbReference type="CD-CODE" id="4299E36E">
    <property type="entry name" value="Nucleolus"/>
</dbReference>
<dbReference type="PRO" id="PR:Q949S9"/>
<dbReference type="Proteomes" id="UP000006548">
    <property type="component" value="Chromosome 3"/>
</dbReference>
<dbReference type="ExpressionAtlas" id="Q949S9">
    <property type="expression patterns" value="baseline and differential"/>
</dbReference>
<dbReference type="GO" id="GO:0005829">
    <property type="term" value="C:cytosol"/>
    <property type="evidence" value="ECO:0007005"/>
    <property type="project" value="TAIR"/>
</dbReference>
<dbReference type="GO" id="GO:0005730">
    <property type="term" value="C:nucleolus"/>
    <property type="evidence" value="ECO:0007005"/>
    <property type="project" value="TAIR"/>
</dbReference>
<dbReference type="GO" id="GO:0005634">
    <property type="term" value="C:nucleus"/>
    <property type="evidence" value="ECO:0000314"/>
    <property type="project" value="TAIR"/>
</dbReference>
<dbReference type="GO" id="GO:0005681">
    <property type="term" value="C:spliceosomal complex"/>
    <property type="evidence" value="ECO:0007669"/>
    <property type="project" value="UniProtKB-KW"/>
</dbReference>
<dbReference type="GO" id="GO:0042742">
    <property type="term" value="P:defense response to bacterium"/>
    <property type="evidence" value="ECO:0000315"/>
    <property type="project" value="TAIR"/>
</dbReference>
<dbReference type="GO" id="GO:0050832">
    <property type="term" value="P:defense response to fungus"/>
    <property type="evidence" value="ECO:0000315"/>
    <property type="project" value="TAIR"/>
</dbReference>
<dbReference type="GO" id="GO:0045087">
    <property type="term" value="P:innate immune response"/>
    <property type="evidence" value="ECO:0007669"/>
    <property type="project" value="UniProtKB-KW"/>
</dbReference>
<dbReference type="GO" id="GO:0006397">
    <property type="term" value="P:mRNA processing"/>
    <property type="evidence" value="ECO:0007669"/>
    <property type="project" value="UniProtKB-KW"/>
</dbReference>
<dbReference type="GO" id="GO:0008380">
    <property type="term" value="P:RNA splicing"/>
    <property type="evidence" value="ECO:0007669"/>
    <property type="project" value="UniProtKB-KW"/>
</dbReference>
<dbReference type="InterPro" id="IPR008409">
    <property type="entry name" value="SPF27"/>
</dbReference>
<dbReference type="PANTHER" id="PTHR13296">
    <property type="entry name" value="BCAS2 PROTEIN"/>
    <property type="match status" value="1"/>
</dbReference>
<dbReference type="PANTHER" id="PTHR13296:SF0">
    <property type="entry name" value="PRE-MRNA-SPLICING FACTOR SPF27"/>
    <property type="match status" value="1"/>
</dbReference>
<dbReference type="Pfam" id="PF05700">
    <property type="entry name" value="BCAS2"/>
    <property type="match status" value="1"/>
</dbReference>
<organism>
    <name type="scientific">Arabidopsis thaliana</name>
    <name type="common">Mouse-ear cress</name>
    <dbReference type="NCBI Taxonomy" id="3702"/>
    <lineage>
        <taxon>Eukaryota</taxon>
        <taxon>Viridiplantae</taxon>
        <taxon>Streptophyta</taxon>
        <taxon>Embryophyta</taxon>
        <taxon>Tracheophyta</taxon>
        <taxon>Spermatophyta</taxon>
        <taxon>Magnoliopsida</taxon>
        <taxon>eudicotyledons</taxon>
        <taxon>Gunneridae</taxon>
        <taxon>Pentapetalae</taxon>
        <taxon>rosids</taxon>
        <taxon>malvids</taxon>
        <taxon>Brassicales</taxon>
        <taxon>Brassicaceae</taxon>
        <taxon>Camelineae</taxon>
        <taxon>Arabidopsis</taxon>
    </lineage>
</organism>
<gene>
    <name type="primary">MOS4</name>
    <name type="synonym">BCAS2</name>
    <name type="synonym">SPF27</name>
    <name type="ordered locus">At3g18165</name>
    <name type="ORF">MRC8.16</name>
</gene>
<accession>Q949S9</accession>
<accession>Q9LV24</accession>
<evidence type="ECO:0000255" key="1"/>
<evidence type="ECO:0000269" key="2">
    <source>
    </source>
</evidence>
<evidence type="ECO:0000269" key="3">
    <source>
    </source>
</evidence>
<evidence type="ECO:0000269" key="4">
    <source>
    </source>
</evidence>
<evidence type="ECO:0000269" key="5">
    <source>
    </source>
</evidence>
<evidence type="ECO:0000305" key="6"/>
<feature type="chain" id="PRO_0000391631" description="Pre-mRNA-splicing factor SPF27 homolog">
    <location>
        <begin position="1"/>
        <end position="253"/>
    </location>
</feature>
<feature type="coiled-coil region" evidence="1">
    <location>
        <begin position="124"/>
        <end position="235"/>
    </location>
</feature>